<comment type="function">
    <text>May play a structural role in the elaioplast, a tapetum-specific plastidial lipid organelle.</text>
</comment>
<comment type="tissue specificity">
    <text>Tapetum of anthers.</text>
</comment>
<reference key="1">
    <citation type="journal article" date="1999" name="Planta">
        <title>Composition and role of tapetal lipid bodies in the biogenesis of the pollen coat of Brassica napus.</title>
        <authorList>
            <person name="Hernandez-Pinzon I."/>
            <person name="Ross J.H.E."/>
            <person name="Barnes K.A."/>
            <person name="Damant A.P."/>
            <person name="Murphy D.J."/>
        </authorList>
    </citation>
    <scope>PROTEIN SEQUENCE</scope>
    <source>
        <strain>cv. Topaz</strain>
        <tissue>Tapetum</tissue>
    </source>
</reference>
<name>PLP_BRANA</name>
<organism>
    <name type="scientific">Brassica napus</name>
    <name type="common">Rape</name>
    <dbReference type="NCBI Taxonomy" id="3708"/>
    <lineage>
        <taxon>Eukaryota</taxon>
        <taxon>Viridiplantae</taxon>
        <taxon>Streptophyta</taxon>
        <taxon>Embryophyta</taxon>
        <taxon>Tracheophyta</taxon>
        <taxon>Spermatophyta</taxon>
        <taxon>Magnoliopsida</taxon>
        <taxon>eudicotyledons</taxon>
        <taxon>Gunneridae</taxon>
        <taxon>Pentapetalae</taxon>
        <taxon>rosids</taxon>
        <taxon>malvids</taxon>
        <taxon>Brassicales</taxon>
        <taxon>Brassicaceae</taxon>
        <taxon>Brassiceae</taxon>
        <taxon>Brassica</taxon>
    </lineage>
</organism>
<proteinExistence type="evidence at protein level"/>
<protein>
    <recommendedName>
        <fullName>Plastidial lipid-associated protein</fullName>
    </recommendedName>
</protein>
<feature type="chain" id="PRO_0000058461" description="Plastidial lipid-associated protein">
    <location>
        <begin position="1"/>
        <end position="8" status="greater than"/>
    </location>
</feature>
<feature type="non-terminal residue">
    <location>
        <position position="8"/>
    </location>
</feature>
<sequence length="8" mass="989">VIDVNDEW</sequence>
<accession>P81707</accession>
<keyword id="KW-0903">Direct protein sequencing</keyword>